<protein>
    <recommendedName>
        <fullName evidence="1">Ribosomal protein L11 methyltransferase</fullName>
        <shortName evidence="1">L11 Mtase</shortName>
        <ecNumber evidence="1">2.1.1.-</ecNumber>
    </recommendedName>
</protein>
<evidence type="ECO:0000255" key="1">
    <source>
        <dbReference type="HAMAP-Rule" id="MF_00735"/>
    </source>
</evidence>
<comment type="function">
    <text evidence="1">Methylates ribosomal protein L11.</text>
</comment>
<comment type="catalytic activity">
    <reaction evidence="1">
        <text>L-lysyl-[protein] + 3 S-adenosyl-L-methionine = N(6),N(6),N(6)-trimethyl-L-lysyl-[protein] + 3 S-adenosyl-L-homocysteine + 3 H(+)</text>
        <dbReference type="Rhea" id="RHEA:54192"/>
        <dbReference type="Rhea" id="RHEA-COMP:9752"/>
        <dbReference type="Rhea" id="RHEA-COMP:13826"/>
        <dbReference type="ChEBI" id="CHEBI:15378"/>
        <dbReference type="ChEBI" id="CHEBI:29969"/>
        <dbReference type="ChEBI" id="CHEBI:57856"/>
        <dbReference type="ChEBI" id="CHEBI:59789"/>
        <dbReference type="ChEBI" id="CHEBI:61961"/>
    </reaction>
</comment>
<comment type="subcellular location">
    <subcellularLocation>
        <location evidence="1">Cytoplasm</location>
    </subcellularLocation>
</comment>
<comment type="similarity">
    <text evidence="1">Belongs to the methyltransferase superfamily. PrmA family.</text>
</comment>
<dbReference type="EC" id="2.1.1.-" evidence="1"/>
<dbReference type="EMBL" id="CP001185">
    <property type="protein sequence ID" value="ACJ74911.1"/>
    <property type="molecule type" value="Genomic_DNA"/>
</dbReference>
<dbReference type="SMR" id="B7IFP7"/>
<dbReference type="STRING" id="484019.THA_418"/>
<dbReference type="KEGG" id="taf:THA_418"/>
<dbReference type="eggNOG" id="COG2264">
    <property type="taxonomic scope" value="Bacteria"/>
</dbReference>
<dbReference type="HOGENOM" id="CLU_049382_0_2_0"/>
<dbReference type="OrthoDB" id="9785995at2"/>
<dbReference type="Proteomes" id="UP000002453">
    <property type="component" value="Chromosome"/>
</dbReference>
<dbReference type="GO" id="GO:0005737">
    <property type="term" value="C:cytoplasm"/>
    <property type="evidence" value="ECO:0007669"/>
    <property type="project" value="UniProtKB-SubCell"/>
</dbReference>
<dbReference type="GO" id="GO:0016279">
    <property type="term" value="F:protein-lysine N-methyltransferase activity"/>
    <property type="evidence" value="ECO:0007669"/>
    <property type="project" value="RHEA"/>
</dbReference>
<dbReference type="GO" id="GO:0032259">
    <property type="term" value="P:methylation"/>
    <property type="evidence" value="ECO:0007669"/>
    <property type="project" value="UniProtKB-KW"/>
</dbReference>
<dbReference type="CDD" id="cd02440">
    <property type="entry name" value="AdoMet_MTases"/>
    <property type="match status" value="1"/>
</dbReference>
<dbReference type="Gene3D" id="3.40.50.150">
    <property type="entry name" value="Vaccinia Virus protein VP39"/>
    <property type="match status" value="1"/>
</dbReference>
<dbReference type="HAMAP" id="MF_00735">
    <property type="entry name" value="Methyltr_PrmA"/>
    <property type="match status" value="1"/>
</dbReference>
<dbReference type="InterPro" id="IPR050078">
    <property type="entry name" value="Ribosomal_L11_MeTrfase_PrmA"/>
</dbReference>
<dbReference type="InterPro" id="IPR004498">
    <property type="entry name" value="Ribosomal_PrmA_MeTrfase"/>
</dbReference>
<dbReference type="InterPro" id="IPR029063">
    <property type="entry name" value="SAM-dependent_MTases_sf"/>
</dbReference>
<dbReference type="PANTHER" id="PTHR43648">
    <property type="entry name" value="ELECTRON TRANSFER FLAVOPROTEIN BETA SUBUNIT LYSINE METHYLTRANSFERASE"/>
    <property type="match status" value="1"/>
</dbReference>
<dbReference type="PANTHER" id="PTHR43648:SF1">
    <property type="entry name" value="ELECTRON TRANSFER FLAVOPROTEIN BETA SUBUNIT LYSINE METHYLTRANSFERASE"/>
    <property type="match status" value="1"/>
</dbReference>
<dbReference type="Pfam" id="PF06325">
    <property type="entry name" value="PrmA"/>
    <property type="match status" value="1"/>
</dbReference>
<dbReference type="PIRSF" id="PIRSF000401">
    <property type="entry name" value="RPL11_MTase"/>
    <property type="match status" value="1"/>
</dbReference>
<dbReference type="SUPFAM" id="SSF53335">
    <property type="entry name" value="S-adenosyl-L-methionine-dependent methyltransferases"/>
    <property type="match status" value="1"/>
</dbReference>
<reference key="1">
    <citation type="journal article" date="2009" name="J. Bacteriol.">
        <title>The genome of Thermosipho africanus TCF52B: lateral genetic connections to the Firmicutes and Archaea.</title>
        <authorList>
            <person name="Nesboe C.L."/>
            <person name="Bapteste E."/>
            <person name="Curtis B."/>
            <person name="Dahle H."/>
            <person name="Lopez P."/>
            <person name="Macleod D."/>
            <person name="Dlutek M."/>
            <person name="Bowman S."/>
            <person name="Zhaxybayeva O."/>
            <person name="Birkeland N.-K."/>
            <person name="Doolittle W.F."/>
        </authorList>
    </citation>
    <scope>NUCLEOTIDE SEQUENCE [LARGE SCALE GENOMIC DNA]</scope>
    <source>
        <strain>TCF52B</strain>
    </source>
</reference>
<gene>
    <name evidence="1" type="primary">prmA</name>
    <name type="ordered locus">THA_418</name>
</gene>
<sequence>MNKVFNEFVYKISQDQIEKIEEYFFENNIKNYYFYETKEGTFLVLVFEEKQEKIFLPFNLEFVENRTTTSEDWVKNLITKPFEFIEGVYVDPDHNNVDGEIVIRITPGLAFGTGLHDTTKLSAKFLKKYLRPGMDVLDLGCGSAILSILAKKLGADRVLGVDNDPLAVEAAKENVERNNVDVEIRQSDLFSNVDGKFDLIVSNIIAEILIEALKDLPKFLKKDGVVILSGIIDSKLPLFKNYNIVEHWRSNEWNALVIKI</sequence>
<proteinExistence type="inferred from homology"/>
<organism>
    <name type="scientific">Thermosipho africanus (strain TCF52B)</name>
    <dbReference type="NCBI Taxonomy" id="484019"/>
    <lineage>
        <taxon>Bacteria</taxon>
        <taxon>Thermotogati</taxon>
        <taxon>Thermotogota</taxon>
        <taxon>Thermotogae</taxon>
        <taxon>Thermotogales</taxon>
        <taxon>Fervidobacteriaceae</taxon>
        <taxon>Thermosipho</taxon>
    </lineage>
</organism>
<name>PRMA_THEAB</name>
<feature type="chain" id="PRO_1000212760" description="Ribosomal protein L11 methyltransferase">
    <location>
        <begin position="1"/>
        <end position="260"/>
    </location>
</feature>
<feature type="binding site" evidence="1">
    <location>
        <position position="119"/>
    </location>
    <ligand>
        <name>S-adenosyl-L-methionine</name>
        <dbReference type="ChEBI" id="CHEBI:59789"/>
    </ligand>
</feature>
<feature type="binding site" evidence="1">
    <location>
        <position position="140"/>
    </location>
    <ligand>
        <name>S-adenosyl-L-methionine</name>
        <dbReference type="ChEBI" id="CHEBI:59789"/>
    </ligand>
</feature>
<feature type="binding site" evidence="1">
    <location>
        <position position="162"/>
    </location>
    <ligand>
        <name>S-adenosyl-L-methionine</name>
        <dbReference type="ChEBI" id="CHEBI:59789"/>
    </ligand>
</feature>
<feature type="binding site" evidence="1">
    <location>
        <position position="203"/>
    </location>
    <ligand>
        <name>S-adenosyl-L-methionine</name>
        <dbReference type="ChEBI" id="CHEBI:59789"/>
    </ligand>
</feature>
<accession>B7IFP7</accession>
<keyword id="KW-0963">Cytoplasm</keyword>
<keyword id="KW-0489">Methyltransferase</keyword>
<keyword id="KW-1185">Reference proteome</keyword>
<keyword id="KW-0949">S-adenosyl-L-methionine</keyword>
<keyword id="KW-0808">Transferase</keyword>